<proteinExistence type="inferred from homology"/>
<reference key="1">
    <citation type="journal article" date="2015" name="Genome Announc.">
        <title>Genome sequence of Aspergillus flavus NRRL 3357, a strain that causes aflatoxin contamination of food and feed.</title>
        <authorList>
            <person name="Nierman W.C."/>
            <person name="Yu J."/>
            <person name="Fedorova-Abrams N.D."/>
            <person name="Losada L."/>
            <person name="Cleveland T.E."/>
            <person name="Bhatnagar D."/>
            <person name="Bennett J.W."/>
            <person name="Dean R."/>
            <person name="Payne G.A."/>
        </authorList>
    </citation>
    <scope>NUCLEOTIDE SEQUENCE [LARGE SCALE GENOMIC DNA]</scope>
    <source>
        <strain>ATCC 200026 / FGSC A1120 / IAM 13836 / NRRL 3357 / JCM 12722 / SRRC 167</strain>
    </source>
</reference>
<organism>
    <name type="scientific">Aspergillus flavus (strain ATCC 200026 / FGSC A1120 / IAM 13836 / NRRL 3357 / JCM 12722 / SRRC 167)</name>
    <dbReference type="NCBI Taxonomy" id="332952"/>
    <lineage>
        <taxon>Eukaryota</taxon>
        <taxon>Fungi</taxon>
        <taxon>Dikarya</taxon>
        <taxon>Ascomycota</taxon>
        <taxon>Pezizomycotina</taxon>
        <taxon>Eurotiomycetes</taxon>
        <taxon>Eurotiomycetidae</taxon>
        <taxon>Eurotiales</taxon>
        <taxon>Aspergillaceae</taxon>
        <taxon>Aspergillus</taxon>
        <taxon>Aspergillus subgen. Circumdati</taxon>
    </lineage>
</organism>
<gene>
    <name type="primary">aim24</name>
    <name type="ORF">AFLA_034130</name>
</gene>
<dbReference type="EMBL" id="EQ963473">
    <property type="protein sequence ID" value="EED56141.1"/>
    <property type="molecule type" value="Genomic_DNA"/>
</dbReference>
<dbReference type="RefSeq" id="XP_002374923.1">
    <property type="nucleotide sequence ID" value="XM_002374882.1"/>
</dbReference>
<dbReference type="EnsemblFungi" id="EED56141">
    <property type="protein sequence ID" value="EED56141"/>
    <property type="gene ID" value="AFLA_034130"/>
</dbReference>
<dbReference type="VEuPathDB" id="FungiDB:AFLA_001286"/>
<dbReference type="eggNOG" id="ENOG502RXC5">
    <property type="taxonomic scope" value="Eukaryota"/>
</dbReference>
<dbReference type="HOGENOM" id="CLU_046558_0_0_1"/>
<dbReference type="OMA" id="QTRCVQI"/>
<dbReference type="GO" id="GO:0005743">
    <property type="term" value="C:mitochondrial inner membrane"/>
    <property type="evidence" value="ECO:0007669"/>
    <property type="project" value="TreeGrafter"/>
</dbReference>
<dbReference type="GO" id="GO:0007007">
    <property type="term" value="P:inner mitochondrial membrane organization"/>
    <property type="evidence" value="ECO:0007669"/>
    <property type="project" value="TreeGrafter"/>
</dbReference>
<dbReference type="FunFam" id="3.60.160.10:FF:000001">
    <property type="entry name" value="Altered inheritance of mitochondria protein 24, mitochondrial"/>
    <property type="match status" value="1"/>
</dbReference>
<dbReference type="Gene3D" id="3.60.160.10">
    <property type="entry name" value="Mitochondrial biogenesis AIM24"/>
    <property type="match status" value="1"/>
</dbReference>
<dbReference type="InterPro" id="IPR002838">
    <property type="entry name" value="AIM24"/>
</dbReference>
<dbReference type="InterPro" id="IPR036983">
    <property type="entry name" value="AIM24_sf"/>
</dbReference>
<dbReference type="InterPro" id="IPR016031">
    <property type="entry name" value="Trp_RNA-bd_attenuator-like_dom"/>
</dbReference>
<dbReference type="PANTHER" id="PTHR36959">
    <property type="entry name" value="ALTERED INHERITANCE OF MITOCHONDRIA PROTEIN 24, MITOCHONDRIAL"/>
    <property type="match status" value="1"/>
</dbReference>
<dbReference type="PANTHER" id="PTHR36959:SF2">
    <property type="entry name" value="ALTERED INHERITANCE OF MITOCHONDRIA PROTEIN 24, MITOCHONDRIAL"/>
    <property type="match status" value="1"/>
</dbReference>
<dbReference type="Pfam" id="PF01987">
    <property type="entry name" value="AIM24"/>
    <property type="match status" value="1"/>
</dbReference>
<dbReference type="SUPFAM" id="SSF51219">
    <property type="entry name" value="TRAP-like"/>
    <property type="match status" value="1"/>
</dbReference>
<evidence type="ECO:0000250" key="1"/>
<evidence type="ECO:0000255" key="2"/>
<evidence type="ECO:0000256" key="3">
    <source>
        <dbReference type="SAM" id="MobiDB-lite"/>
    </source>
</evidence>
<evidence type="ECO:0000305" key="4"/>
<keyword id="KW-0496">Mitochondrion</keyword>
<keyword id="KW-0809">Transit peptide</keyword>
<name>AIM24_ASPFN</name>
<protein>
    <recommendedName>
        <fullName>Altered inheritance of mitochondria protein 24, mitochondrial</fullName>
    </recommendedName>
</protein>
<feature type="transit peptide" description="Mitochondrion" evidence="2">
    <location>
        <begin position="1"/>
        <end position="11"/>
    </location>
</feature>
<feature type="chain" id="PRO_0000399568" description="Altered inheritance of mitochondria protein 24, mitochondrial">
    <location>
        <begin position="12"/>
        <end position="402"/>
    </location>
</feature>
<feature type="region of interest" description="Disordered" evidence="3">
    <location>
        <begin position="35"/>
        <end position="54"/>
    </location>
</feature>
<feature type="compositionally biased region" description="Polar residues" evidence="3">
    <location>
        <begin position="39"/>
        <end position="54"/>
    </location>
</feature>
<sequence length="402" mass="43733">MSQPLRRGVRAVSWTRVLPPRARQGQTRCLQIRAAAAEQPSSANGNNLPVVGTPSSAESADARFDVIGAPYSLLSVSLSASQNLFTRRGTLVGLSGKADNVVSTLSVLEPFRRAVVGVPFLYQKVSSASPVTALVSVRSPTTSFAVVHLDGSVDWMVAQRRALLAWTGRSLSIKPTINTSLSVSHWGSSEVTGRGLLALVGAGQLYQVEVKAGEQYIVHPSNVVAYTMTNNPPRPYRFKSTTLKFQVPGLKGWPSFIQDSKFIRDMSGSDTWKTAMNIFHKIRTWSRMTIWGDRLFLQFDGPATILIQTRGPRINEVLTSHEVNEIASAPRGLTIGPAKPAEEKKPSADEEYRKAAEEAVNAAPAPTRTVEQLEQEIRGSAQSIATLTKEGKVIFEKPGQQN</sequence>
<comment type="subcellular location">
    <subcellularLocation>
        <location evidence="1">Mitochondrion</location>
    </subcellularLocation>
</comment>
<comment type="similarity">
    <text evidence="4">Belongs to the AIM24 family.</text>
</comment>
<accession>B8N219</accession>